<keyword id="KW-0235">DNA replication</keyword>
<keyword id="KW-0240">DNA-directed RNA polymerase</keyword>
<keyword id="KW-0460">Magnesium</keyword>
<keyword id="KW-0464">Manganese</keyword>
<keyword id="KW-0479">Metal-binding</keyword>
<keyword id="KW-0548">Nucleotidyltransferase</keyword>
<keyword id="KW-0639">Primosome</keyword>
<keyword id="KW-0804">Transcription</keyword>
<keyword id="KW-0808">Transferase</keyword>
<keyword id="KW-0862">Zinc</keyword>
<gene>
    <name evidence="2" type="primary">priS</name>
    <name type="synonym">priA</name>
    <name type="ordered locus">LS215_1270</name>
</gene>
<sequence length="330" mass="37410">MGTFTLHQGQSNLIKSFFRNYYLNAELGLPNDMELREFALQPFGSDTYIRHLSFSSSEELRDYLVNRNLPLHLFYSSARYQLPSARDMEEKAWMGSDLLFDIDADHICKLRSIRFCPVCGNAITSEKCERDNVETLEYVEMTSECIKRGLEEARNLVEILEDDFGLKPKVYFSGNRGFHVQVDCYGDCALLDSDERKEIAEYVMGVGVPSYPGGSESAPGWVGRKNRGINGVTIDGQVTIDVKRLIRIPNSLHGKSGLIVKEVTNLDDFEFNEALSPFTGYTIFLPYISIETEVLSRNIKLNRGVPIKIESSIGIYLHLKNLGEVKAYVR</sequence>
<accession>C3MPG7</accession>
<comment type="function">
    <text evidence="2">Catalytic subunit of DNA primase, an RNA polymerase that catalyzes the synthesis of short RNA molecules used as primers for DNA polymerase during DNA replication. The small subunit contains the primase catalytic core and has DNA synthesis activity on its own. Binding to the large subunit stabilizes and modulates the activity, increasing the rate of DNA synthesis while decreasing the length of the DNA fragments, and conferring RNA synthesis capability. The DNA polymerase activity may enable DNA primase to also catalyze primer extension after primer synthesis. May also play a role in DNA repair.</text>
</comment>
<comment type="cofactor">
    <cofactor evidence="2">
        <name>Mg(2+)</name>
        <dbReference type="ChEBI" id="CHEBI:18420"/>
    </cofactor>
    <cofactor evidence="2">
        <name>Mn(2+)</name>
        <dbReference type="ChEBI" id="CHEBI:29035"/>
    </cofactor>
</comment>
<comment type="subunit">
    <text evidence="2">Heterodimer of a small subunit (PriS) and a large subunit (PriL).</text>
</comment>
<comment type="similarity">
    <text evidence="2">Belongs to the eukaryotic-type primase small subunit family.</text>
</comment>
<evidence type="ECO:0000250" key="1"/>
<evidence type="ECO:0000255" key="2">
    <source>
        <dbReference type="HAMAP-Rule" id="MF_00700"/>
    </source>
</evidence>
<proteinExistence type="inferred from homology"/>
<dbReference type="EC" id="2.7.7.-" evidence="2"/>
<dbReference type="EMBL" id="CP001399">
    <property type="protein sequence ID" value="ACP35280.1"/>
    <property type="molecule type" value="Genomic_DNA"/>
</dbReference>
<dbReference type="RefSeq" id="WP_012713609.1">
    <property type="nucleotide sequence ID" value="NC_012589.1"/>
</dbReference>
<dbReference type="SMR" id="C3MPG7"/>
<dbReference type="GeneID" id="7797781"/>
<dbReference type="GeneID" id="7810640"/>
<dbReference type="KEGG" id="sis:LS215_1270"/>
<dbReference type="HOGENOM" id="CLU_056123_0_0_2"/>
<dbReference type="OrthoDB" id="31125at2157"/>
<dbReference type="Proteomes" id="UP000001747">
    <property type="component" value="Chromosome"/>
</dbReference>
<dbReference type="GO" id="GO:0000428">
    <property type="term" value="C:DNA-directed RNA polymerase complex"/>
    <property type="evidence" value="ECO:0007669"/>
    <property type="project" value="UniProtKB-KW"/>
</dbReference>
<dbReference type="GO" id="GO:1990077">
    <property type="term" value="C:primosome complex"/>
    <property type="evidence" value="ECO:0007669"/>
    <property type="project" value="UniProtKB-KW"/>
</dbReference>
<dbReference type="GO" id="GO:0003899">
    <property type="term" value="F:DNA-directed RNA polymerase activity"/>
    <property type="evidence" value="ECO:0007669"/>
    <property type="project" value="InterPro"/>
</dbReference>
<dbReference type="GO" id="GO:0046872">
    <property type="term" value="F:metal ion binding"/>
    <property type="evidence" value="ECO:0007669"/>
    <property type="project" value="UniProtKB-KW"/>
</dbReference>
<dbReference type="GO" id="GO:0006269">
    <property type="term" value="P:DNA replication, synthesis of primer"/>
    <property type="evidence" value="ECO:0007669"/>
    <property type="project" value="UniProtKB-UniRule"/>
</dbReference>
<dbReference type="CDD" id="cd04860">
    <property type="entry name" value="AE_Prim_S"/>
    <property type="match status" value="1"/>
</dbReference>
<dbReference type="FunFam" id="3.90.920.10:FF:000006">
    <property type="entry name" value="DNA primase small subunit PriS"/>
    <property type="match status" value="1"/>
</dbReference>
<dbReference type="Gene3D" id="3.90.920.10">
    <property type="entry name" value="DNA primase, PRIM domain"/>
    <property type="match status" value="1"/>
</dbReference>
<dbReference type="HAMAP" id="MF_00700">
    <property type="entry name" value="DNA_primase_sml_arc"/>
    <property type="match status" value="1"/>
</dbReference>
<dbReference type="InterPro" id="IPR002755">
    <property type="entry name" value="DNA_primase_S"/>
</dbReference>
<dbReference type="InterPro" id="IPR014052">
    <property type="entry name" value="DNA_primase_ssu_euk/arc"/>
</dbReference>
<dbReference type="InterPro" id="IPR023639">
    <property type="entry name" value="DNA_primase_ssu_PriS"/>
</dbReference>
<dbReference type="NCBIfam" id="NF001641">
    <property type="entry name" value="PRK00419.1-3"/>
    <property type="match status" value="1"/>
</dbReference>
<dbReference type="PANTHER" id="PTHR10536">
    <property type="entry name" value="DNA PRIMASE SMALL SUBUNIT"/>
    <property type="match status" value="1"/>
</dbReference>
<dbReference type="Pfam" id="PF01896">
    <property type="entry name" value="DNA_primase_S"/>
    <property type="match status" value="1"/>
</dbReference>
<dbReference type="Pfam" id="PF20873">
    <property type="entry name" value="PriS_C"/>
    <property type="match status" value="1"/>
</dbReference>
<dbReference type="SUPFAM" id="SSF56747">
    <property type="entry name" value="Prim-pol domain"/>
    <property type="match status" value="1"/>
</dbReference>
<name>PRIS_SACI2</name>
<reference key="1">
    <citation type="journal article" date="2009" name="Proc. Natl. Acad. Sci. U.S.A.">
        <title>Biogeography of the Sulfolobus islandicus pan-genome.</title>
        <authorList>
            <person name="Reno M.L."/>
            <person name="Held N.L."/>
            <person name="Fields C.J."/>
            <person name="Burke P.V."/>
            <person name="Whitaker R.J."/>
        </authorList>
    </citation>
    <scope>NUCLEOTIDE SEQUENCE [LARGE SCALE GENOMIC DNA]</scope>
    <source>
        <strain>L.S.2.15 / Lassen #1</strain>
    </source>
</reference>
<organism>
    <name type="scientific">Saccharolobus islandicus (strain L.S.2.15 / Lassen #1)</name>
    <name type="common">Sulfolobus islandicus</name>
    <dbReference type="NCBI Taxonomy" id="429572"/>
    <lineage>
        <taxon>Archaea</taxon>
        <taxon>Thermoproteota</taxon>
        <taxon>Thermoprotei</taxon>
        <taxon>Sulfolobales</taxon>
        <taxon>Sulfolobaceae</taxon>
        <taxon>Saccharolobus</taxon>
    </lineage>
</organism>
<feature type="chain" id="PRO_1000212638" description="DNA primase small subunit PriS">
    <location>
        <begin position="1"/>
        <end position="330"/>
    </location>
</feature>
<feature type="active site" evidence="2">
    <location>
        <position position="101"/>
    </location>
</feature>
<feature type="active site" evidence="2">
    <location>
        <position position="103"/>
    </location>
</feature>
<feature type="active site" evidence="2">
    <location>
        <position position="235"/>
    </location>
</feature>
<feature type="binding site" evidence="1">
    <location>
        <position position="116"/>
    </location>
    <ligand>
        <name>Zn(2+)</name>
        <dbReference type="ChEBI" id="CHEBI:29105"/>
    </ligand>
</feature>
<feature type="binding site" evidence="1">
    <location>
        <position position="119"/>
    </location>
    <ligand>
        <name>Zn(2+)</name>
        <dbReference type="ChEBI" id="CHEBI:29105"/>
    </ligand>
</feature>
<feature type="binding site" evidence="1">
    <location>
        <position position="128"/>
    </location>
    <ligand>
        <name>Zn(2+)</name>
        <dbReference type="ChEBI" id="CHEBI:29105"/>
    </ligand>
</feature>
<feature type="binding site" evidence="1">
    <location>
        <position position="131"/>
    </location>
    <ligand>
        <name>Zn(2+)</name>
        <dbReference type="ChEBI" id="CHEBI:29105"/>
    </ligand>
</feature>
<protein>
    <recommendedName>
        <fullName evidence="2">DNA primase small subunit PriS</fullName>
        <ecNumber evidence="2">2.7.7.-</ecNumber>
    </recommendedName>
</protein>